<name>CF157_XENTR</name>
<keyword id="KW-0966">Cell projection</keyword>
<keyword id="KW-0969">Cilium</keyword>
<keyword id="KW-0175">Coiled coil</keyword>
<keyword id="KW-0963">Cytoplasm</keyword>
<keyword id="KW-0206">Cytoskeleton</keyword>
<keyword id="KW-1185">Reference proteome</keyword>
<evidence type="ECO:0000250" key="1">
    <source>
        <dbReference type="UniProtKB" id="Q0VFX2"/>
    </source>
</evidence>
<evidence type="ECO:0000250" key="2">
    <source>
        <dbReference type="UniProtKB" id="Q5JU67"/>
    </source>
</evidence>
<evidence type="ECO:0000255" key="3"/>
<evidence type="ECO:0000256" key="4">
    <source>
        <dbReference type="SAM" id="MobiDB-lite"/>
    </source>
</evidence>
<evidence type="ECO:0000305" key="5"/>
<proteinExistence type="evidence at transcript level"/>
<comment type="function">
    <text evidence="1">Specifically required during spermatogenesis for flagellum morphogenesis and sperm motility.</text>
</comment>
<comment type="subcellular location">
    <subcellularLocation>
        <location evidence="1">Cytoplasm</location>
        <location evidence="1">Cytoskeleton</location>
        <location evidence="1">Cilium basal body</location>
    </subcellularLocation>
</comment>
<comment type="similarity">
    <text evidence="5">Belongs to the CFAP157 family.</text>
</comment>
<dbReference type="EMBL" id="BC118759">
    <property type="protein sequence ID" value="AAI18760.1"/>
    <property type="molecule type" value="mRNA"/>
</dbReference>
<dbReference type="RefSeq" id="NP_001072774.1">
    <property type="nucleotide sequence ID" value="NM_001079306.1"/>
</dbReference>
<dbReference type="SMR" id="Q0VFN8"/>
<dbReference type="FunCoup" id="Q0VFN8">
    <property type="interactions" value="89"/>
</dbReference>
<dbReference type="PaxDb" id="8364-ENSXETP00000009700"/>
<dbReference type="DNASU" id="780234"/>
<dbReference type="GeneID" id="780234"/>
<dbReference type="KEGG" id="xtr:780234"/>
<dbReference type="AGR" id="Xenbase:XB-GENE-5795998"/>
<dbReference type="CTD" id="286207"/>
<dbReference type="Xenbase" id="XB-GENE-5795998">
    <property type="gene designation" value="cfap157"/>
</dbReference>
<dbReference type="eggNOG" id="ENOG502QQK8">
    <property type="taxonomic scope" value="Eukaryota"/>
</dbReference>
<dbReference type="InParanoid" id="Q0VFN8"/>
<dbReference type="OrthoDB" id="166611at2759"/>
<dbReference type="Proteomes" id="UP000008143">
    <property type="component" value="Chromosome 4"/>
</dbReference>
<dbReference type="GO" id="GO:0036064">
    <property type="term" value="C:ciliary basal body"/>
    <property type="evidence" value="ECO:0000250"/>
    <property type="project" value="UniProtKB"/>
</dbReference>
<dbReference type="GO" id="GO:0005737">
    <property type="term" value="C:cytoplasm"/>
    <property type="evidence" value="ECO:0007669"/>
    <property type="project" value="UniProtKB-KW"/>
</dbReference>
<dbReference type="GO" id="GO:0008017">
    <property type="term" value="F:microtubule binding"/>
    <property type="evidence" value="ECO:0000250"/>
    <property type="project" value="UniProtKB"/>
</dbReference>
<dbReference type="GO" id="GO:0007288">
    <property type="term" value="P:sperm axoneme assembly"/>
    <property type="evidence" value="ECO:0000250"/>
    <property type="project" value="UniProtKB"/>
</dbReference>
<dbReference type="InterPro" id="IPR038844">
    <property type="entry name" value="CFAP157"/>
</dbReference>
<dbReference type="PANTHER" id="PTHR31954">
    <property type="entry name" value="CILIA- AND FLAGELLA-ASSOCIATED PROTEIN 157"/>
    <property type="match status" value="1"/>
</dbReference>
<dbReference type="PANTHER" id="PTHR31954:SF1">
    <property type="entry name" value="CILIA- AND FLAGELLA-ASSOCIATED PROTEIN 157"/>
    <property type="match status" value="1"/>
</dbReference>
<accession>Q0VFN8</accession>
<gene>
    <name evidence="2" type="primary">cfap157</name>
</gene>
<organism>
    <name type="scientific">Xenopus tropicalis</name>
    <name type="common">Western clawed frog</name>
    <name type="synonym">Silurana tropicalis</name>
    <dbReference type="NCBI Taxonomy" id="8364"/>
    <lineage>
        <taxon>Eukaryota</taxon>
        <taxon>Metazoa</taxon>
        <taxon>Chordata</taxon>
        <taxon>Craniata</taxon>
        <taxon>Vertebrata</taxon>
        <taxon>Euteleostomi</taxon>
        <taxon>Amphibia</taxon>
        <taxon>Batrachia</taxon>
        <taxon>Anura</taxon>
        <taxon>Pipoidea</taxon>
        <taxon>Pipidae</taxon>
        <taxon>Xenopodinae</taxon>
        <taxon>Xenopus</taxon>
        <taxon>Silurana</taxon>
    </lineage>
</organism>
<reference key="1">
    <citation type="submission" date="2006-07" db="EMBL/GenBank/DDBJ databases">
        <authorList>
            <consortium name="NIH - Xenopus Gene Collection (XGC) project"/>
        </authorList>
    </citation>
    <scope>NUCLEOTIDE SEQUENCE [LARGE SCALE MRNA]</scope>
    <source>
        <tissue>Testis</tissue>
    </source>
</reference>
<protein>
    <recommendedName>
        <fullName evidence="5">Cilia- and flagella-associated protein 157</fullName>
    </recommendedName>
</protein>
<sequence>MPPKKKGKRGPSAKTKEKETVRVASEGVTEQTKDFYTVQIRDLEKRLERYQSKWDEICAKEQLKEAQYEQLSNDKKEIVSFLKRTLNQRMDEIADLNDQLLGLQQAKDAEKDAYESQLTQVRHELQDTKERLTSENMLLAGKLASLEEFRVQKEELMGKFAALEEKVKEQEQEHKEAMYILEKKVVLDKDRLKKEMVQRVSTVAAEFRRVSNNQMAETTKRAIRENVSISLQLDKMSDKSIELISENDLLKDRNSELTKQLEMLEENEKELVKNNLSNQKVIRMLTDKCQQQQEILTLLEHTQHALNELQSQHHNLKDESQQLKQKLVSLEDDLQRVTQEKEGLSRQLEEEKQRTLAVDMILSQAAAFLKDMLLTHSEDETEGMQLERRNKMLQQLQLLLDSSATLGLGSSLHEFETKQGHSLKSLKTNRQPVSPVLKGPGVTAHYRIGDLGLVPRQDVSNAVLSKTAMLSKITRLGPLRGTHGISKELLSWTQEEKQIKHSALPEISPGAPSKLLMAK</sequence>
<feature type="chain" id="PRO_0000307229" description="Cilia- and flagella-associated protein 157">
    <location>
        <begin position="1"/>
        <end position="519"/>
    </location>
</feature>
<feature type="region of interest" description="Disordered" evidence="4">
    <location>
        <begin position="1"/>
        <end position="25"/>
    </location>
</feature>
<feature type="coiled-coil region" evidence="3">
    <location>
        <begin position="28"/>
        <end position="185"/>
    </location>
</feature>
<feature type="coiled-coil region" evidence="3">
    <location>
        <begin position="241"/>
        <end position="356"/>
    </location>
</feature>
<feature type="compositionally biased region" description="Basic residues" evidence="4">
    <location>
        <begin position="1"/>
        <end position="11"/>
    </location>
</feature>